<accession>C6DG70</accession>
<sequence length="92" mass="10444">MPRSLKKGPFIDLHLLKKVEKAVESGDKKPLRTWSRRSTIFPNMIGLTIAVHNGRQHVPVFVSDEMVGHKLGEFAPTRTYRGHAADKKAKKR</sequence>
<dbReference type="EMBL" id="CP001657">
    <property type="protein sequence ID" value="ACT14833.1"/>
    <property type="molecule type" value="Genomic_DNA"/>
</dbReference>
<dbReference type="RefSeq" id="WP_004929772.1">
    <property type="nucleotide sequence ID" value="NC_012917.1"/>
</dbReference>
<dbReference type="SMR" id="C6DG70"/>
<dbReference type="STRING" id="561230.PC1_3818"/>
<dbReference type="GeneID" id="98190602"/>
<dbReference type="KEGG" id="pct:PC1_3818"/>
<dbReference type="eggNOG" id="COG0185">
    <property type="taxonomic scope" value="Bacteria"/>
</dbReference>
<dbReference type="HOGENOM" id="CLU_144911_0_1_6"/>
<dbReference type="OrthoDB" id="9797833at2"/>
<dbReference type="Proteomes" id="UP000002736">
    <property type="component" value="Chromosome"/>
</dbReference>
<dbReference type="GO" id="GO:0005737">
    <property type="term" value="C:cytoplasm"/>
    <property type="evidence" value="ECO:0007669"/>
    <property type="project" value="UniProtKB-ARBA"/>
</dbReference>
<dbReference type="GO" id="GO:0015935">
    <property type="term" value="C:small ribosomal subunit"/>
    <property type="evidence" value="ECO:0007669"/>
    <property type="project" value="InterPro"/>
</dbReference>
<dbReference type="GO" id="GO:0019843">
    <property type="term" value="F:rRNA binding"/>
    <property type="evidence" value="ECO:0007669"/>
    <property type="project" value="UniProtKB-UniRule"/>
</dbReference>
<dbReference type="GO" id="GO:0003735">
    <property type="term" value="F:structural constituent of ribosome"/>
    <property type="evidence" value="ECO:0007669"/>
    <property type="project" value="InterPro"/>
</dbReference>
<dbReference type="GO" id="GO:0000028">
    <property type="term" value="P:ribosomal small subunit assembly"/>
    <property type="evidence" value="ECO:0007669"/>
    <property type="project" value="TreeGrafter"/>
</dbReference>
<dbReference type="GO" id="GO:0006412">
    <property type="term" value="P:translation"/>
    <property type="evidence" value="ECO:0007669"/>
    <property type="project" value="UniProtKB-UniRule"/>
</dbReference>
<dbReference type="FunFam" id="3.30.860.10:FF:000001">
    <property type="entry name" value="30S ribosomal protein S19"/>
    <property type="match status" value="1"/>
</dbReference>
<dbReference type="Gene3D" id="3.30.860.10">
    <property type="entry name" value="30s Ribosomal Protein S19, Chain A"/>
    <property type="match status" value="1"/>
</dbReference>
<dbReference type="HAMAP" id="MF_00531">
    <property type="entry name" value="Ribosomal_uS19"/>
    <property type="match status" value="1"/>
</dbReference>
<dbReference type="InterPro" id="IPR002222">
    <property type="entry name" value="Ribosomal_uS19"/>
</dbReference>
<dbReference type="InterPro" id="IPR005732">
    <property type="entry name" value="Ribosomal_uS19_bac-type"/>
</dbReference>
<dbReference type="InterPro" id="IPR020934">
    <property type="entry name" value="Ribosomal_uS19_CS"/>
</dbReference>
<dbReference type="InterPro" id="IPR023575">
    <property type="entry name" value="Ribosomal_uS19_SF"/>
</dbReference>
<dbReference type="NCBIfam" id="TIGR01050">
    <property type="entry name" value="rpsS_bact"/>
    <property type="match status" value="1"/>
</dbReference>
<dbReference type="PANTHER" id="PTHR11880">
    <property type="entry name" value="RIBOSOMAL PROTEIN S19P FAMILY MEMBER"/>
    <property type="match status" value="1"/>
</dbReference>
<dbReference type="PANTHER" id="PTHR11880:SF8">
    <property type="entry name" value="SMALL RIBOSOMAL SUBUNIT PROTEIN US19M"/>
    <property type="match status" value="1"/>
</dbReference>
<dbReference type="Pfam" id="PF00203">
    <property type="entry name" value="Ribosomal_S19"/>
    <property type="match status" value="1"/>
</dbReference>
<dbReference type="PIRSF" id="PIRSF002144">
    <property type="entry name" value="Ribosomal_S19"/>
    <property type="match status" value="1"/>
</dbReference>
<dbReference type="PRINTS" id="PR00975">
    <property type="entry name" value="RIBOSOMALS19"/>
</dbReference>
<dbReference type="SUPFAM" id="SSF54570">
    <property type="entry name" value="Ribosomal protein S19"/>
    <property type="match status" value="1"/>
</dbReference>
<dbReference type="PROSITE" id="PS00323">
    <property type="entry name" value="RIBOSOMAL_S19"/>
    <property type="match status" value="1"/>
</dbReference>
<evidence type="ECO:0000255" key="1">
    <source>
        <dbReference type="HAMAP-Rule" id="MF_00531"/>
    </source>
</evidence>
<evidence type="ECO:0000305" key="2"/>
<organism>
    <name type="scientific">Pectobacterium carotovorum subsp. carotovorum (strain PC1)</name>
    <dbReference type="NCBI Taxonomy" id="561230"/>
    <lineage>
        <taxon>Bacteria</taxon>
        <taxon>Pseudomonadati</taxon>
        <taxon>Pseudomonadota</taxon>
        <taxon>Gammaproteobacteria</taxon>
        <taxon>Enterobacterales</taxon>
        <taxon>Pectobacteriaceae</taxon>
        <taxon>Pectobacterium</taxon>
    </lineage>
</organism>
<feature type="chain" id="PRO_1000211814" description="Small ribosomal subunit protein uS19">
    <location>
        <begin position="1"/>
        <end position="92"/>
    </location>
</feature>
<reference key="1">
    <citation type="submission" date="2009-07" db="EMBL/GenBank/DDBJ databases">
        <title>Complete sequence of Pectobacterium carotovorum subsp. carotovorum PC1.</title>
        <authorList>
            <consortium name="US DOE Joint Genome Institute"/>
            <person name="Lucas S."/>
            <person name="Copeland A."/>
            <person name="Lapidus A."/>
            <person name="Glavina del Rio T."/>
            <person name="Tice H."/>
            <person name="Bruce D."/>
            <person name="Goodwin L."/>
            <person name="Pitluck S."/>
            <person name="Munk A.C."/>
            <person name="Brettin T."/>
            <person name="Detter J.C."/>
            <person name="Han C."/>
            <person name="Tapia R."/>
            <person name="Larimer F."/>
            <person name="Land M."/>
            <person name="Hauser L."/>
            <person name="Kyrpides N."/>
            <person name="Mikhailova N."/>
            <person name="Balakrishnan V."/>
            <person name="Glasner J."/>
            <person name="Perna N.T."/>
        </authorList>
    </citation>
    <scope>NUCLEOTIDE SEQUENCE [LARGE SCALE GENOMIC DNA]</scope>
    <source>
        <strain>PC1</strain>
    </source>
</reference>
<comment type="function">
    <text evidence="1">Protein S19 forms a complex with S13 that binds strongly to the 16S ribosomal RNA.</text>
</comment>
<comment type="similarity">
    <text evidence="1">Belongs to the universal ribosomal protein uS19 family.</text>
</comment>
<keyword id="KW-0687">Ribonucleoprotein</keyword>
<keyword id="KW-0689">Ribosomal protein</keyword>
<keyword id="KW-0694">RNA-binding</keyword>
<keyword id="KW-0699">rRNA-binding</keyword>
<name>RS19_PECCP</name>
<protein>
    <recommendedName>
        <fullName evidence="1">Small ribosomal subunit protein uS19</fullName>
    </recommendedName>
    <alternativeName>
        <fullName evidence="2">30S ribosomal protein S19</fullName>
    </alternativeName>
</protein>
<proteinExistence type="inferred from homology"/>
<gene>
    <name evidence="1" type="primary">rpsS</name>
    <name type="ordered locus">PC1_3818</name>
</gene>